<evidence type="ECO:0000250" key="1"/>
<evidence type="ECO:0000305" key="2"/>
<dbReference type="EMBL" id="AE016817">
    <property type="protein sequence ID" value="AAS51601.1"/>
    <property type="molecule type" value="Genomic_DNA"/>
</dbReference>
<dbReference type="RefSeq" id="NP_983777.1">
    <property type="nucleotide sequence ID" value="NM_209130.1"/>
</dbReference>
<dbReference type="SMR" id="Q75B89"/>
<dbReference type="FunCoup" id="Q75B89">
    <property type="interactions" value="237"/>
</dbReference>
<dbReference type="STRING" id="284811.Q75B89"/>
<dbReference type="EnsemblFungi" id="AAS51601">
    <property type="protein sequence ID" value="AAS51601"/>
    <property type="gene ID" value="AGOS_ADL319W"/>
</dbReference>
<dbReference type="GeneID" id="4619912"/>
<dbReference type="KEGG" id="ago:AGOS_ADL319W"/>
<dbReference type="eggNOG" id="KOG2160">
    <property type="taxonomic scope" value="Eukaryota"/>
</dbReference>
<dbReference type="HOGENOM" id="CLU_046722_1_0_1"/>
<dbReference type="InParanoid" id="Q75B89"/>
<dbReference type="OMA" id="LHWSIAN"/>
<dbReference type="OrthoDB" id="10250458at2759"/>
<dbReference type="Proteomes" id="UP000000591">
    <property type="component" value="Chromosome IV"/>
</dbReference>
<dbReference type="GO" id="GO:0005829">
    <property type="term" value="C:cytosol"/>
    <property type="evidence" value="ECO:0007669"/>
    <property type="project" value="EnsemblFungi"/>
</dbReference>
<dbReference type="GO" id="GO:0005783">
    <property type="term" value="C:endoplasmic reticulum"/>
    <property type="evidence" value="ECO:0000318"/>
    <property type="project" value="GO_Central"/>
</dbReference>
<dbReference type="GO" id="GO:0000774">
    <property type="term" value="F:adenyl-nucleotide exchange factor activity"/>
    <property type="evidence" value="ECO:0000318"/>
    <property type="project" value="GO_Central"/>
</dbReference>
<dbReference type="GO" id="GO:0071629">
    <property type="term" value="P:cytoplasm protein quality control by the ubiquitin-proteasome system"/>
    <property type="evidence" value="ECO:0007669"/>
    <property type="project" value="EnsemblFungi"/>
</dbReference>
<dbReference type="GO" id="GO:0006417">
    <property type="term" value="P:regulation of translation"/>
    <property type="evidence" value="ECO:0007669"/>
    <property type="project" value="UniProtKB-KW"/>
</dbReference>
<dbReference type="Gene3D" id="1.25.10.10">
    <property type="entry name" value="Leucine-rich Repeat Variant"/>
    <property type="match status" value="1"/>
</dbReference>
<dbReference type="InterPro" id="IPR011989">
    <property type="entry name" value="ARM-like"/>
</dbReference>
<dbReference type="InterPro" id="IPR016024">
    <property type="entry name" value="ARM-type_fold"/>
</dbReference>
<dbReference type="InterPro" id="IPR000225">
    <property type="entry name" value="Armadillo"/>
</dbReference>
<dbReference type="InterPro" id="IPR050693">
    <property type="entry name" value="Hsp70_NEF-Inhibitors"/>
</dbReference>
<dbReference type="InterPro" id="IPR013918">
    <property type="entry name" value="Nucleotide_exch_fac_Fes1"/>
</dbReference>
<dbReference type="PANTHER" id="PTHR19316:SF18">
    <property type="entry name" value="HSP70-BINDING PROTEIN 1"/>
    <property type="match status" value="1"/>
</dbReference>
<dbReference type="PANTHER" id="PTHR19316">
    <property type="entry name" value="PROTEIN FOLDING REGULATOR"/>
    <property type="match status" value="1"/>
</dbReference>
<dbReference type="Pfam" id="PF08609">
    <property type="entry name" value="Fes1"/>
    <property type="match status" value="1"/>
</dbReference>
<dbReference type="SUPFAM" id="SSF48371">
    <property type="entry name" value="ARM repeat"/>
    <property type="match status" value="1"/>
</dbReference>
<dbReference type="PROSITE" id="PS50176">
    <property type="entry name" value="ARM_REPEAT"/>
    <property type="match status" value="1"/>
</dbReference>
<protein>
    <recommendedName>
        <fullName>Hsp70 nucleotide exchange factor FES1</fullName>
    </recommendedName>
</protein>
<keyword id="KW-0963">Cytoplasm</keyword>
<keyword id="KW-1185">Reference proteome</keyword>
<keyword id="KW-0677">Repeat</keyword>
<keyword id="KW-0810">Translation regulation</keyword>
<sequence length="289" mass="32025">MDKLLHWSIANAQGDKEAAAKAGAPDPKLLQQLFGGGPDEPALMRDAMAVIMNPEATVDNKLVAFDNFEMLIENLDNANNIENMRLWAPLISILESEEEQLRECALSVVGTAVQNNEKSQSNFLKHDGAMKKIIELARKDSESEQVRTKAFYALSNIVRHNKDASALFVDNGGLEIMAPVLKHQNTGEKMKIRALALLTSVLTSLSADEKFSDRIREDKILEASLEHLAPSANPYLIDRVLNLLVLMKGSGAKFDTDELSKIRKSFASLYPVKDQLNEDDYNAVKEMLG</sequence>
<comment type="function">
    <text evidence="1">Functions as a nucleotide exchange factor (NEF) for Hsp70 chaperones which accelerates the release of ADP. Required for fully efficient Hsp70-mediated folding of proteins (By similarity).</text>
</comment>
<comment type="subcellular location">
    <subcellularLocation>
        <location evidence="1">Cytoplasm</location>
    </subcellularLocation>
</comment>
<comment type="similarity">
    <text evidence="2">Belongs to the FES1 family.</text>
</comment>
<gene>
    <name type="primary">FES1</name>
    <name type="ordered locus">ADL319W</name>
</gene>
<name>FES1_EREGS</name>
<feature type="chain" id="PRO_0000285383" description="Hsp70 nucleotide exchange factor FES1">
    <location>
        <begin position="1"/>
        <end position="289"/>
    </location>
</feature>
<feature type="repeat" description="ARM 1">
    <location>
        <begin position="13"/>
        <end position="56"/>
    </location>
</feature>
<feature type="repeat" description="ARM 2">
    <location>
        <begin position="75"/>
        <end position="114"/>
    </location>
</feature>
<feature type="repeat" description="ARM 3">
    <location>
        <begin position="118"/>
        <end position="159"/>
    </location>
</feature>
<feature type="repeat" description="ARM 4">
    <location>
        <begin position="162"/>
        <end position="203"/>
    </location>
</feature>
<feature type="repeat" description="ARM 5">
    <location>
        <begin position="222"/>
        <end position="267"/>
    </location>
</feature>
<reference key="1">
    <citation type="journal article" date="2004" name="Science">
        <title>The Ashbya gossypii genome as a tool for mapping the ancient Saccharomyces cerevisiae genome.</title>
        <authorList>
            <person name="Dietrich F.S."/>
            <person name="Voegeli S."/>
            <person name="Brachat S."/>
            <person name="Lerch A."/>
            <person name="Gates K."/>
            <person name="Steiner S."/>
            <person name="Mohr C."/>
            <person name="Poehlmann R."/>
            <person name="Luedi P."/>
            <person name="Choi S."/>
            <person name="Wing R.A."/>
            <person name="Flavier A."/>
            <person name="Gaffney T.D."/>
            <person name="Philippsen P."/>
        </authorList>
    </citation>
    <scope>NUCLEOTIDE SEQUENCE [LARGE SCALE GENOMIC DNA]</scope>
    <source>
        <strain>ATCC 10895 / CBS 109.51 / FGSC 9923 / NRRL Y-1056</strain>
    </source>
</reference>
<reference key="2">
    <citation type="journal article" date="2013" name="G3 (Bethesda)">
        <title>Genomes of Ashbya fungi isolated from insects reveal four mating-type loci, numerous translocations, lack of transposons, and distinct gene duplications.</title>
        <authorList>
            <person name="Dietrich F.S."/>
            <person name="Voegeli S."/>
            <person name="Kuo S."/>
            <person name="Philippsen P."/>
        </authorList>
    </citation>
    <scope>GENOME REANNOTATION</scope>
    <source>
        <strain>ATCC 10895 / CBS 109.51 / FGSC 9923 / NRRL Y-1056</strain>
    </source>
</reference>
<organism>
    <name type="scientific">Eremothecium gossypii (strain ATCC 10895 / CBS 109.51 / FGSC 9923 / NRRL Y-1056)</name>
    <name type="common">Yeast</name>
    <name type="synonym">Ashbya gossypii</name>
    <dbReference type="NCBI Taxonomy" id="284811"/>
    <lineage>
        <taxon>Eukaryota</taxon>
        <taxon>Fungi</taxon>
        <taxon>Dikarya</taxon>
        <taxon>Ascomycota</taxon>
        <taxon>Saccharomycotina</taxon>
        <taxon>Saccharomycetes</taxon>
        <taxon>Saccharomycetales</taxon>
        <taxon>Saccharomycetaceae</taxon>
        <taxon>Eremothecium</taxon>
    </lineage>
</organism>
<proteinExistence type="inferred from homology"/>
<accession>Q75B89</accession>